<gene>
    <name evidence="1" type="primary">tusD</name>
    <name type="ordered locus">EFER_3315</name>
</gene>
<keyword id="KW-0963">Cytoplasm</keyword>
<keyword id="KW-0808">Transferase</keyword>
<keyword id="KW-0819">tRNA processing</keyword>
<proteinExistence type="inferred from homology"/>
<reference key="1">
    <citation type="journal article" date="2009" name="PLoS Genet.">
        <title>Organised genome dynamics in the Escherichia coli species results in highly diverse adaptive paths.</title>
        <authorList>
            <person name="Touchon M."/>
            <person name="Hoede C."/>
            <person name="Tenaillon O."/>
            <person name="Barbe V."/>
            <person name="Baeriswyl S."/>
            <person name="Bidet P."/>
            <person name="Bingen E."/>
            <person name="Bonacorsi S."/>
            <person name="Bouchier C."/>
            <person name="Bouvet O."/>
            <person name="Calteau A."/>
            <person name="Chiapello H."/>
            <person name="Clermont O."/>
            <person name="Cruveiller S."/>
            <person name="Danchin A."/>
            <person name="Diard M."/>
            <person name="Dossat C."/>
            <person name="Karoui M.E."/>
            <person name="Frapy E."/>
            <person name="Garry L."/>
            <person name="Ghigo J.M."/>
            <person name="Gilles A.M."/>
            <person name="Johnson J."/>
            <person name="Le Bouguenec C."/>
            <person name="Lescat M."/>
            <person name="Mangenot S."/>
            <person name="Martinez-Jehanne V."/>
            <person name="Matic I."/>
            <person name="Nassif X."/>
            <person name="Oztas S."/>
            <person name="Petit M.A."/>
            <person name="Pichon C."/>
            <person name="Rouy Z."/>
            <person name="Ruf C.S."/>
            <person name="Schneider D."/>
            <person name="Tourret J."/>
            <person name="Vacherie B."/>
            <person name="Vallenet D."/>
            <person name="Medigue C."/>
            <person name="Rocha E.P.C."/>
            <person name="Denamur E."/>
        </authorList>
    </citation>
    <scope>NUCLEOTIDE SEQUENCE [LARGE SCALE GENOMIC DNA]</scope>
    <source>
        <strain>ATCC 35469 / DSM 13698 / BCRC 15582 / CCUG 18766 / IAM 14443 / JCM 21226 / LMG 7866 / NBRC 102419 / NCTC 12128 / CDC 0568-73</strain>
    </source>
</reference>
<protein>
    <recommendedName>
        <fullName evidence="1">Sulfurtransferase TusD</fullName>
        <ecNumber evidence="1">2.8.1.-</ecNumber>
    </recommendedName>
    <alternativeName>
        <fullName evidence="1">tRNA 2-thiouridine synthesizing protein D</fullName>
    </alternativeName>
</protein>
<name>TUSD_ESCF3</name>
<accession>B7LS51</accession>
<dbReference type="EC" id="2.8.1.-" evidence="1"/>
<dbReference type="EMBL" id="CU928158">
    <property type="protein sequence ID" value="CAQ90794.1"/>
    <property type="molecule type" value="Genomic_DNA"/>
</dbReference>
<dbReference type="RefSeq" id="WP_001209698.1">
    <property type="nucleotide sequence ID" value="NC_011740.1"/>
</dbReference>
<dbReference type="SMR" id="B7LS51"/>
<dbReference type="GeneID" id="75060075"/>
<dbReference type="KEGG" id="efe:EFER_3315"/>
<dbReference type="HOGENOM" id="CLU_132095_0_0_6"/>
<dbReference type="OrthoDB" id="9787483at2"/>
<dbReference type="Proteomes" id="UP000000745">
    <property type="component" value="Chromosome"/>
</dbReference>
<dbReference type="GO" id="GO:1990228">
    <property type="term" value="C:sulfurtransferase complex"/>
    <property type="evidence" value="ECO:0007669"/>
    <property type="project" value="TreeGrafter"/>
</dbReference>
<dbReference type="GO" id="GO:0097163">
    <property type="term" value="F:sulfur carrier activity"/>
    <property type="evidence" value="ECO:0007669"/>
    <property type="project" value="TreeGrafter"/>
</dbReference>
<dbReference type="GO" id="GO:0016783">
    <property type="term" value="F:sulfurtransferase activity"/>
    <property type="evidence" value="ECO:0007669"/>
    <property type="project" value="UniProtKB-UniRule"/>
</dbReference>
<dbReference type="GO" id="GO:0002143">
    <property type="term" value="P:tRNA wobble position uridine thiolation"/>
    <property type="evidence" value="ECO:0007669"/>
    <property type="project" value="TreeGrafter"/>
</dbReference>
<dbReference type="FunFam" id="3.40.1260.10:FF:000001">
    <property type="entry name" value="Sulfurtransferase TusD"/>
    <property type="match status" value="1"/>
</dbReference>
<dbReference type="Gene3D" id="3.40.1260.10">
    <property type="entry name" value="DsrEFH-like"/>
    <property type="match status" value="1"/>
</dbReference>
<dbReference type="HAMAP" id="MF_00390">
    <property type="entry name" value="Thiourid_synth_D"/>
    <property type="match status" value="1"/>
</dbReference>
<dbReference type="InterPro" id="IPR027396">
    <property type="entry name" value="DsrEFH-like"/>
</dbReference>
<dbReference type="InterPro" id="IPR003787">
    <property type="entry name" value="Sulphur_relay_DsrE/F-like"/>
</dbReference>
<dbReference type="InterPro" id="IPR017463">
    <property type="entry name" value="Sulphur_relay_TusD/DsrE"/>
</dbReference>
<dbReference type="NCBIfam" id="NF001237">
    <property type="entry name" value="PRK00207.1"/>
    <property type="match status" value="1"/>
</dbReference>
<dbReference type="NCBIfam" id="TIGR03012">
    <property type="entry name" value="sulf_tusD_dsrE"/>
    <property type="match status" value="1"/>
</dbReference>
<dbReference type="PANTHER" id="PTHR34874">
    <property type="entry name" value="PROTEIN YCHN"/>
    <property type="match status" value="1"/>
</dbReference>
<dbReference type="PANTHER" id="PTHR34874:SF3">
    <property type="entry name" value="SULFURTRANSFERASE TUSD"/>
    <property type="match status" value="1"/>
</dbReference>
<dbReference type="Pfam" id="PF02635">
    <property type="entry name" value="DsrE"/>
    <property type="match status" value="1"/>
</dbReference>
<dbReference type="SUPFAM" id="SSF75169">
    <property type="entry name" value="DsrEFH-like"/>
    <property type="match status" value="1"/>
</dbReference>
<sequence length="128" mass="13644">MRFAIVVTGPAYGTQQASSAFQFAQALIAEGHELSSVFFYREGVYNANQLTSPASDEFDLVRGWQQLNTQHGVALNICVAAALRRGVVDETEAGRLGLASSNLQTGFTLSGLGALAEASLTCDRVVQF</sequence>
<organism>
    <name type="scientific">Escherichia fergusonii (strain ATCC 35469 / DSM 13698 / CCUG 18766 / IAM 14443 / JCM 21226 / LMG 7866 / NBRC 102419 / NCTC 12128 / CDC 0568-73)</name>
    <dbReference type="NCBI Taxonomy" id="585054"/>
    <lineage>
        <taxon>Bacteria</taxon>
        <taxon>Pseudomonadati</taxon>
        <taxon>Pseudomonadota</taxon>
        <taxon>Gammaproteobacteria</taxon>
        <taxon>Enterobacterales</taxon>
        <taxon>Enterobacteriaceae</taxon>
        <taxon>Escherichia</taxon>
    </lineage>
</organism>
<feature type="chain" id="PRO_1000122865" description="Sulfurtransferase TusD">
    <location>
        <begin position="1"/>
        <end position="128"/>
    </location>
</feature>
<feature type="active site" description="Cysteine persulfide intermediate" evidence="1">
    <location>
        <position position="78"/>
    </location>
</feature>
<comment type="function">
    <text evidence="1">Part of a sulfur-relay system required for 2-thiolation of 5-methylaminomethyl-2-thiouridine (mnm(5)s(2)U) at tRNA wobble positions. Accepts sulfur from TusA and transfers it in turn to TusE.</text>
</comment>
<comment type="subunit">
    <text evidence="1">Heterohexamer, formed by a dimer of trimers. The hexameric TusBCD complex contains 2 copies each of TusB, TusC and TusD. The TusBCD complex interacts with TusE.</text>
</comment>
<comment type="subcellular location">
    <subcellularLocation>
        <location evidence="1">Cytoplasm</location>
    </subcellularLocation>
</comment>
<comment type="similarity">
    <text evidence="1">Belongs to the DsrE/TusD family.</text>
</comment>
<evidence type="ECO:0000255" key="1">
    <source>
        <dbReference type="HAMAP-Rule" id="MF_00390"/>
    </source>
</evidence>